<gene>
    <name evidence="15 20" type="primary">HABP2</name>
    <name type="synonym">HGFAL</name>
</gene>
<keyword id="KW-0025">Alternative splicing</keyword>
<keyword id="KW-0165">Cleavage on pair of basic residues</keyword>
<keyword id="KW-0903">Direct protein sequencing</keyword>
<keyword id="KW-1015">Disulfide bond</keyword>
<keyword id="KW-0245">EGF-like domain</keyword>
<keyword id="KW-0325">Glycoprotein</keyword>
<keyword id="KW-0378">Hydrolase</keyword>
<keyword id="KW-0420">Kringle</keyword>
<keyword id="KW-0645">Protease</keyword>
<keyword id="KW-1267">Proteomics identification</keyword>
<keyword id="KW-1185">Reference proteome</keyword>
<keyword id="KW-0677">Repeat</keyword>
<keyword id="KW-0964">Secreted</keyword>
<keyword id="KW-0720">Serine protease</keyword>
<keyword id="KW-0732">Signal</keyword>
<protein>
    <recommendedName>
        <fullName evidence="13">Factor VII-activating protease</fullName>
        <shortName evidence="18">FSAP</shortName>
        <ecNumber evidence="7">3.4.21.-</ecNumber>
    </recommendedName>
    <alternativeName>
        <fullName evidence="13">FVII activator</fullName>
    </alternativeName>
    <alternativeName>
        <fullName evidence="13">Hepatocyte growth factor activator-like protein</fullName>
    </alternativeName>
    <alternativeName>
        <fullName>Hyaluronan-binding protein 2</fullName>
    </alternativeName>
    <alternativeName>
        <fullName evidence="16">Plasma hyaluronan-binding protein</fullName>
        <shortName evidence="16">PHBP</shortName>
    </alternativeName>
    <alternativeName>
        <fullName>Plasma hyaluronan-binding serine protease</fullName>
        <shortName>PHBSP</shortName>
    </alternativeName>
    <component>
        <recommendedName>
            <fullName evidence="19">Factor VII-activating protease 50 kDa N-terminal heavy chain</fullName>
        </recommendedName>
    </component>
    <component>
        <recommendedName>
            <fullName evidence="19">Factor VII-activating protease 50 kDa N-terminal heavy chain alternate form</fullName>
        </recommendedName>
    </component>
    <component>
        <recommendedName>
            <fullName evidence="19">Factor VII-activating protease 27 kDa C-terminal light chain</fullName>
        </recommendedName>
    </component>
    <component>
        <recommendedName>
            <fullName evidence="19">Factor VII-activating protease 27 kDa C-terminal light chain alternate form</fullName>
        </recommendedName>
    </component>
</protein>
<organism>
    <name type="scientific">Homo sapiens</name>
    <name type="common">Human</name>
    <dbReference type="NCBI Taxonomy" id="9606"/>
    <lineage>
        <taxon>Eukaryota</taxon>
        <taxon>Metazoa</taxon>
        <taxon>Chordata</taxon>
        <taxon>Craniata</taxon>
        <taxon>Vertebrata</taxon>
        <taxon>Euteleostomi</taxon>
        <taxon>Mammalia</taxon>
        <taxon>Eutheria</taxon>
        <taxon>Euarchontoglires</taxon>
        <taxon>Primates</taxon>
        <taxon>Haplorrhini</taxon>
        <taxon>Catarrhini</taxon>
        <taxon>Hominidae</taxon>
        <taxon>Homo</taxon>
    </lineage>
</organism>
<comment type="function">
    <text evidence="6 7 10 18">Cleaves the alpha-chain at multiple sites and the beta-chain between 'Lys-53' and 'Lys-54' but not the gamma-chain of fibrinogen and therefore does not initiate the formation of the fibrin clot and does not cause the fibrinolysis directly (PubMed:11217080). It does not cleave (activate) prothrombin and plasminogen but converts the inactive single chain urinary plasminogen activator (pro-urokinase) to the active two chain form (PubMed:10754382, PubMed:11217080). Activates coagulation factor VII (Probable). May function as a tumor suppressor negatively regulating cell proliferation and cell migration (PubMed:26222560).</text>
</comment>
<comment type="subunit">
    <text evidence="8 11">Heterodimer; disulfide-linked. Heterodimer of a 50 kDa heavy and a 27 kDa light chain linked by a disulfide bond.</text>
</comment>
<comment type="subcellular location">
    <subcellularLocation>
        <location evidence="11">Secreted</location>
    </subcellularLocation>
    <text>Secreted as an inactive single-chain precursor and is then activated to a heterodimeric form.</text>
</comment>
<comment type="alternative products">
    <event type="alternative splicing"/>
    <isoform>
        <id>Q14520-1</id>
        <name>1</name>
        <sequence type="displayed"/>
    </isoform>
    <isoform>
        <id>Q14520-2</id>
        <name>2</name>
        <sequence type="described" ref="VSP_044583"/>
    </isoform>
</comment>
<comment type="tissue specificity">
    <text evidence="11">Ubiquitously expressed.</text>
</comment>
<comment type="PTM">
    <text evidence="8 11">Proteolytic cleavage at Gly-23 or Met-27 can give rise to the 50 kDa heavy chain (HC) and cleavage at Arg-313 or Lys-319 can give rise to the 27 kDa light chain (LC) (PubMed:8827452). The HC can undergo further proteolytic cleavage giving rise to a 26 kDa fragment (PubMed:11379758). The LC can undergo further proteolytic cleavage at Arg-313 leading to a 17-kDa fragment and at Arg-480 leading to a 8-kDa fragment (PubMed:11379758).</text>
</comment>
<comment type="disease" evidence="9 10">
    <disease id="DI-04531">
        <name>Thyroid cancer, non-medullary, 5</name>
        <acronym>NMTC5</acronym>
        <description>A form of non-medullary thyroid cancer (NMTC), a cancer characterized by tumors originating from the thyroid follicular cells. NMTCs represent approximately 95% of all cases of thyroid cancer and are classified into papillary, follicular, Hurthle cell, and anaplastic neoplasms.</description>
        <dbReference type="MIM" id="616535"/>
    </disease>
    <text>Disease susceptibility is associated with variants affecting the gene represented in this entry.</text>
</comment>
<comment type="similarity">
    <text evidence="5">Belongs to the peptidase S1 family.</text>
</comment>
<reference key="1">
    <citation type="journal article" date="1996" name="J. Biochem.">
        <title>Purification and characterization of a novel hyaluronan-binding protein (PHBP) from human plasma: it has three EGF, a kringle and a serine protease domain, similar to hepatocyte growth factor activator.</title>
        <authorList>
            <person name="Choi-Miura N.-H."/>
            <person name="Tobe T."/>
            <person name="Sumiya J."/>
            <person name="Nakano Y."/>
            <person name="Sano Y."/>
            <person name="Mazda T."/>
            <person name="Tomita M."/>
        </authorList>
    </citation>
    <scope>NUCLEOTIDE SEQUENCE [MRNA] (ISOFORM 1)</scope>
    <scope>PROTEIN SEQUENCE OF 24-42; 140-169; 174-183; 206-235; 255-260; 314-334; 417-429; 433-459; 500-517 AND 546-551</scope>
    <scope>PROTEOLYTIC CLEAVAGE</scope>
    <scope>SUBCELLULAR LOCATION</scope>
    <scope>TISSUE SPECIFICITY</scope>
    <scope>SUBUNIT</scope>
    <source>
        <tissue>Plasma</tissue>
    </source>
</reference>
<reference key="2">
    <citation type="submission" date="1995-03" db="EMBL/GenBank/DDBJ databases">
        <authorList>
            <person name="Kitamura N."/>
        </authorList>
    </citation>
    <scope>NUCLEOTIDE SEQUENCE [MRNA] (ISOFORM 1)</scope>
</reference>
<reference key="3">
    <citation type="submission" date="2004-01" db="EMBL/GenBank/DDBJ databases">
        <authorList>
            <consortium name="SeattleSNPs variation discovery resource"/>
        </authorList>
    </citation>
    <scope>NUCLEOTIDE SEQUENCE [GENOMIC DNA]</scope>
    <scope>VARIANTS ILE-90 AND GLN-393</scope>
    <scope>VARIANT NMTC5 GLU-534</scope>
</reference>
<reference key="4">
    <citation type="journal article" date="2004" name="Nat. Genet.">
        <title>Complete sequencing and characterization of 21,243 full-length human cDNAs.</title>
        <authorList>
            <person name="Ota T."/>
            <person name="Suzuki Y."/>
            <person name="Nishikawa T."/>
            <person name="Otsuki T."/>
            <person name="Sugiyama T."/>
            <person name="Irie R."/>
            <person name="Wakamatsu A."/>
            <person name="Hayashi K."/>
            <person name="Sato H."/>
            <person name="Nagai K."/>
            <person name="Kimura K."/>
            <person name="Makita H."/>
            <person name="Sekine M."/>
            <person name="Obayashi M."/>
            <person name="Nishi T."/>
            <person name="Shibahara T."/>
            <person name="Tanaka T."/>
            <person name="Ishii S."/>
            <person name="Yamamoto J."/>
            <person name="Saito K."/>
            <person name="Kawai Y."/>
            <person name="Isono Y."/>
            <person name="Nakamura Y."/>
            <person name="Nagahari K."/>
            <person name="Murakami K."/>
            <person name="Yasuda T."/>
            <person name="Iwayanagi T."/>
            <person name="Wagatsuma M."/>
            <person name="Shiratori A."/>
            <person name="Sudo H."/>
            <person name="Hosoiri T."/>
            <person name="Kaku Y."/>
            <person name="Kodaira H."/>
            <person name="Kondo H."/>
            <person name="Sugawara M."/>
            <person name="Takahashi M."/>
            <person name="Kanda K."/>
            <person name="Yokoi T."/>
            <person name="Furuya T."/>
            <person name="Kikkawa E."/>
            <person name="Omura Y."/>
            <person name="Abe K."/>
            <person name="Kamihara K."/>
            <person name="Katsuta N."/>
            <person name="Sato K."/>
            <person name="Tanikawa M."/>
            <person name="Yamazaki M."/>
            <person name="Ninomiya K."/>
            <person name="Ishibashi T."/>
            <person name="Yamashita H."/>
            <person name="Murakawa K."/>
            <person name="Fujimori K."/>
            <person name="Tanai H."/>
            <person name="Kimata M."/>
            <person name="Watanabe M."/>
            <person name="Hiraoka S."/>
            <person name="Chiba Y."/>
            <person name="Ishida S."/>
            <person name="Ono Y."/>
            <person name="Takiguchi S."/>
            <person name="Watanabe S."/>
            <person name="Yosida M."/>
            <person name="Hotuta T."/>
            <person name="Kusano J."/>
            <person name="Kanehori K."/>
            <person name="Takahashi-Fujii A."/>
            <person name="Hara H."/>
            <person name="Tanase T.-O."/>
            <person name="Nomura Y."/>
            <person name="Togiya S."/>
            <person name="Komai F."/>
            <person name="Hara R."/>
            <person name="Takeuchi K."/>
            <person name="Arita M."/>
            <person name="Imose N."/>
            <person name="Musashino K."/>
            <person name="Yuuki H."/>
            <person name="Oshima A."/>
            <person name="Sasaki N."/>
            <person name="Aotsuka S."/>
            <person name="Yoshikawa Y."/>
            <person name="Matsunawa H."/>
            <person name="Ichihara T."/>
            <person name="Shiohata N."/>
            <person name="Sano S."/>
            <person name="Moriya S."/>
            <person name="Momiyama H."/>
            <person name="Satoh N."/>
            <person name="Takami S."/>
            <person name="Terashima Y."/>
            <person name="Suzuki O."/>
            <person name="Nakagawa S."/>
            <person name="Senoh A."/>
            <person name="Mizoguchi H."/>
            <person name="Goto Y."/>
            <person name="Shimizu F."/>
            <person name="Wakebe H."/>
            <person name="Hishigaki H."/>
            <person name="Watanabe T."/>
            <person name="Sugiyama A."/>
            <person name="Takemoto M."/>
            <person name="Kawakami B."/>
            <person name="Yamazaki M."/>
            <person name="Watanabe K."/>
            <person name="Kumagai A."/>
            <person name="Itakura S."/>
            <person name="Fukuzumi Y."/>
            <person name="Fujimori Y."/>
            <person name="Komiyama M."/>
            <person name="Tashiro H."/>
            <person name="Tanigami A."/>
            <person name="Fujiwara T."/>
            <person name="Ono T."/>
            <person name="Yamada K."/>
            <person name="Fujii Y."/>
            <person name="Ozaki K."/>
            <person name="Hirao M."/>
            <person name="Ohmori Y."/>
            <person name="Kawabata A."/>
            <person name="Hikiji T."/>
            <person name="Kobatake N."/>
            <person name="Inagaki H."/>
            <person name="Ikema Y."/>
            <person name="Okamoto S."/>
            <person name="Okitani R."/>
            <person name="Kawakami T."/>
            <person name="Noguchi S."/>
            <person name="Itoh T."/>
            <person name="Shigeta K."/>
            <person name="Senba T."/>
            <person name="Matsumura K."/>
            <person name="Nakajima Y."/>
            <person name="Mizuno T."/>
            <person name="Morinaga M."/>
            <person name="Sasaki M."/>
            <person name="Togashi T."/>
            <person name="Oyama M."/>
            <person name="Hata H."/>
            <person name="Watanabe M."/>
            <person name="Komatsu T."/>
            <person name="Mizushima-Sugano J."/>
            <person name="Satoh T."/>
            <person name="Shirai Y."/>
            <person name="Takahashi Y."/>
            <person name="Nakagawa K."/>
            <person name="Okumura K."/>
            <person name="Nagase T."/>
            <person name="Nomura N."/>
            <person name="Kikuchi H."/>
            <person name="Masuho Y."/>
            <person name="Yamashita R."/>
            <person name="Nakai K."/>
            <person name="Yada T."/>
            <person name="Nakamura Y."/>
            <person name="Ohara O."/>
            <person name="Isogai T."/>
            <person name="Sugano S."/>
        </authorList>
    </citation>
    <scope>NUCLEOTIDE SEQUENCE [LARGE SCALE MRNA] (ISOFORMS 1 AND 2)</scope>
    <source>
        <tissue>Liver</tissue>
        <tissue>Trachea</tissue>
    </source>
</reference>
<reference key="5">
    <citation type="journal article" date="2004" name="Nature">
        <title>The DNA sequence and comparative analysis of human chromosome 10.</title>
        <authorList>
            <person name="Deloukas P."/>
            <person name="Earthrowl M.E."/>
            <person name="Grafham D.V."/>
            <person name="Rubenfield M."/>
            <person name="French L."/>
            <person name="Steward C.A."/>
            <person name="Sims S.K."/>
            <person name="Jones M.C."/>
            <person name="Searle S."/>
            <person name="Scott C."/>
            <person name="Howe K."/>
            <person name="Hunt S.E."/>
            <person name="Andrews T.D."/>
            <person name="Gilbert J.G.R."/>
            <person name="Swarbreck D."/>
            <person name="Ashurst J.L."/>
            <person name="Taylor A."/>
            <person name="Battles J."/>
            <person name="Bird C.P."/>
            <person name="Ainscough R."/>
            <person name="Almeida J.P."/>
            <person name="Ashwell R.I.S."/>
            <person name="Ambrose K.D."/>
            <person name="Babbage A.K."/>
            <person name="Bagguley C.L."/>
            <person name="Bailey J."/>
            <person name="Banerjee R."/>
            <person name="Bates K."/>
            <person name="Beasley H."/>
            <person name="Bray-Allen S."/>
            <person name="Brown A.J."/>
            <person name="Brown J.Y."/>
            <person name="Burford D.C."/>
            <person name="Burrill W."/>
            <person name="Burton J."/>
            <person name="Cahill P."/>
            <person name="Camire D."/>
            <person name="Carter N.P."/>
            <person name="Chapman J.C."/>
            <person name="Clark S.Y."/>
            <person name="Clarke G."/>
            <person name="Clee C.M."/>
            <person name="Clegg S."/>
            <person name="Corby N."/>
            <person name="Coulson A."/>
            <person name="Dhami P."/>
            <person name="Dutta I."/>
            <person name="Dunn M."/>
            <person name="Faulkner L."/>
            <person name="Frankish A."/>
            <person name="Frankland J.A."/>
            <person name="Garner P."/>
            <person name="Garnett J."/>
            <person name="Gribble S."/>
            <person name="Griffiths C."/>
            <person name="Grocock R."/>
            <person name="Gustafson E."/>
            <person name="Hammond S."/>
            <person name="Harley J.L."/>
            <person name="Hart E."/>
            <person name="Heath P.D."/>
            <person name="Ho T.P."/>
            <person name="Hopkins B."/>
            <person name="Horne J."/>
            <person name="Howden P.J."/>
            <person name="Huckle E."/>
            <person name="Hynds C."/>
            <person name="Johnson C."/>
            <person name="Johnson D."/>
            <person name="Kana A."/>
            <person name="Kay M."/>
            <person name="Kimberley A.M."/>
            <person name="Kershaw J.K."/>
            <person name="Kokkinaki M."/>
            <person name="Laird G.K."/>
            <person name="Lawlor S."/>
            <person name="Lee H.M."/>
            <person name="Leongamornlert D.A."/>
            <person name="Laird G."/>
            <person name="Lloyd C."/>
            <person name="Lloyd D.M."/>
            <person name="Loveland J."/>
            <person name="Lovell J."/>
            <person name="McLaren S."/>
            <person name="McLay K.E."/>
            <person name="McMurray A."/>
            <person name="Mashreghi-Mohammadi M."/>
            <person name="Matthews L."/>
            <person name="Milne S."/>
            <person name="Nickerson T."/>
            <person name="Nguyen M."/>
            <person name="Overton-Larty E."/>
            <person name="Palmer S.A."/>
            <person name="Pearce A.V."/>
            <person name="Peck A.I."/>
            <person name="Pelan S."/>
            <person name="Phillimore B."/>
            <person name="Porter K."/>
            <person name="Rice C.M."/>
            <person name="Rogosin A."/>
            <person name="Ross M.T."/>
            <person name="Sarafidou T."/>
            <person name="Sehra H.K."/>
            <person name="Shownkeen R."/>
            <person name="Skuce C.D."/>
            <person name="Smith M."/>
            <person name="Standring L."/>
            <person name="Sycamore N."/>
            <person name="Tester J."/>
            <person name="Thorpe A."/>
            <person name="Torcasso W."/>
            <person name="Tracey A."/>
            <person name="Tromans A."/>
            <person name="Tsolas J."/>
            <person name="Wall M."/>
            <person name="Walsh J."/>
            <person name="Wang H."/>
            <person name="Weinstock K."/>
            <person name="West A.P."/>
            <person name="Willey D.L."/>
            <person name="Whitehead S.L."/>
            <person name="Wilming L."/>
            <person name="Wray P.W."/>
            <person name="Young L."/>
            <person name="Chen Y."/>
            <person name="Lovering R.C."/>
            <person name="Moschonas N.K."/>
            <person name="Siebert R."/>
            <person name="Fechtel K."/>
            <person name="Bentley D."/>
            <person name="Durbin R.M."/>
            <person name="Hubbard T."/>
            <person name="Doucette-Stamm L."/>
            <person name="Beck S."/>
            <person name="Smith D.R."/>
            <person name="Rogers J."/>
        </authorList>
    </citation>
    <scope>NUCLEOTIDE SEQUENCE [LARGE SCALE GENOMIC DNA]</scope>
</reference>
<reference key="6">
    <citation type="submission" date="2005-09" db="EMBL/GenBank/DDBJ databases">
        <authorList>
            <person name="Mural R.J."/>
            <person name="Istrail S."/>
            <person name="Sutton G.G."/>
            <person name="Florea L."/>
            <person name="Halpern A.L."/>
            <person name="Mobarry C.M."/>
            <person name="Lippert R."/>
            <person name="Walenz B."/>
            <person name="Shatkay H."/>
            <person name="Dew I."/>
            <person name="Miller J.R."/>
            <person name="Flanigan M.J."/>
            <person name="Edwards N.J."/>
            <person name="Bolanos R."/>
            <person name="Fasulo D."/>
            <person name="Halldorsson B.V."/>
            <person name="Hannenhalli S."/>
            <person name="Turner R."/>
            <person name="Yooseph S."/>
            <person name="Lu F."/>
            <person name="Nusskern D.R."/>
            <person name="Shue B.C."/>
            <person name="Zheng X.H."/>
            <person name="Zhong F."/>
            <person name="Delcher A.L."/>
            <person name="Huson D.H."/>
            <person name="Kravitz S.A."/>
            <person name="Mouchard L."/>
            <person name="Reinert K."/>
            <person name="Remington K.A."/>
            <person name="Clark A.G."/>
            <person name="Waterman M.S."/>
            <person name="Eichler E.E."/>
            <person name="Adams M.D."/>
            <person name="Hunkapiller M.W."/>
            <person name="Myers E.W."/>
            <person name="Venter J.C."/>
        </authorList>
    </citation>
    <scope>NUCLEOTIDE SEQUENCE [LARGE SCALE GENOMIC DNA]</scope>
</reference>
<reference key="7">
    <citation type="journal article" date="2004" name="Genome Res.">
        <title>The status, quality, and expansion of the NIH full-length cDNA project: the Mammalian Gene Collection (MGC).</title>
        <authorList>
            <consortium name="The MGC Project Team"/>
        </authorList>
    </citation>
    <scope>NUCLEOTIDE SEQUENCE [LARGE SCALE MRNA] (ISOFORM 1)</scope>
    <source>
        <tissue>Colon</tissue>
    </source>
</reference>
<reference key="8">
    <citation type="journal article" date="2001" name="Biol. Pharm. Bull.">
        <title>Proteolytic activation and inactivation of the serine protease activity of plasma hyaluronan binding protein.</title>
        <authorList>
            <person name="Choi-Miura N.H."/>
            <person name="Takahashi K."/>
            <person name="Yoda M."/>
            <person name="Saito K."/>
            <person name="Mazda T."/>
            <person name="Tomita M."/>
        </authorList>
    </citation>
    <scope>PARTIAL PROTEIN SEQUENCE</scope>
    <scope>POST-TRANSLATIONAL MODIFICATIONS</scope>
    <scope>SUBUNIT</scope>
</reference>
<reference key="9">
    <citation type="journal article" date="1999" name="Haemostasis">
        <title>The FVII activating protease cleaves single-chain plasminogen activators.</title>
        <authorList>
            <person name="Roemisch J."/>
            <person name="Vermoehlen S."/>
            <person name="Feussner A."/>
            <person name="Stoehr H.-A."/>
        </authorList>
    </citation>
    <scope>FUNCTION</scope>
</reference>
<reference key="10">
    <citation type="journal article" date="2001" name="Biol. Pharm. Bull.">
        <title>Identification of the substrates for plasma hyaluronan binding protein.</title>
        <authorList>
            <person name="Choi-Miura N.H."/>
            <person name="Yoda M."/>
            <person name="Saito K."/>
            <person name="Takahashi K."/>
            <person name="Tomita M."/>
        </authorList>
    </citation>
    <scope>FUNCTION</scope>
</reference>
<reference key="11">
    <citation type="journal article" date="2003" name="Circulation">
        <title>Marburg I polymorphism of factor VII-activating protease: a prominent risk predictor of carotid stenosis.</title>
        <authorList>
            <person name="Willeit J."/>
            <person name="Kiechl S."/>
            <person name="Weimer T."/>
            <person name="Mair A."/>
            <person name="Santer P."/>
            <person name="Wiedermann C.J."/>
            <person name="Roemisch J."/>
        </authorList>
    </citation>
    <scope>VARIANT GLN-393</scope>
    <scope>VARIANT NMTC5 GLU-534</scope>
</reference>
<reference key="12">
    <citation type="journal article" date="2015" name="N. Engl. J. Med.">
        <title>Germline HABP2 mutation causing familial nonmedullary thyroid cancer.</title>
        <authorList>
            <person name="Gara S.K."/>
            <person name="Jia L."/>
            <person name="Merino M.J."/>
            <person name="Agarwal S.K."/>
            <person name="Zhang L."/>
            <person name="Cam M."/>
            <person name="Patel D."/>
            <person name="Kebebew E."/>
        </authorList>
    </citation>
    <scope>FUNCTION</scope>
    <scope>INVOLVEMENT IN NMTC5</scope>
    <scope>VARIANT NMTC5 GLU-534</scope>
    <scope>CHARACTERIZATION OF VARIANT NMTC5 GLU-534</scope>
</reference>
<sequence length="560" mass="62672">MFARMSDLHVLLLMALVGKTACGFSLMSLLESLDPDWTPDQYDYSYEDYNQEENTSSTLTHAENPDWYYTEDQADPCQPNPCEHGGDCLVHGSTFTCSCLAPFSGNKCQKVQNTCKDNPCGRGQCLITQSPPYYRCVCKHPYTGPSCSQVVPVCRPNPCQNGATCSRHKRRSKFTCACPDQFKGKFCEIGSDDCYVGDGYSYRGKMNRTVNQHACLYWNSHLLLQENYNMFMEDAETHGIGEHNFCRNPDADEKPWCFIKVTNDKVKWEYCDVSACSAQDVAYPEESPTEPSTKLPGFDSCGKTEIAERKIKRIYGGFKSTAGKHPWQASLQSSLPLTISMPQGHFCGGALIHPCWVLTAAHCTDIKTRHLKVVLGDQDLKKEEFHEQSFRVEKIFKYSHYNERDEIPHNDIALLKLKPVDGHCALESKYVKTVCLPDGSFPSGSECHISGWGVTETGKGSRQLLDAKVKLIANTLCNSRQLYDHMIDDSMICAGNLQKPGQDTCQGDSGGPLTCEKDGTYYVYGIVSWGLECGKRPGVYTQVTKFLNWIKATIKSESGF</sequence>
<proteinExistence type="evidence at protein level"/>
<dbReference type="EC" id="3.4.21.-" evidence="7"/>
<dbReference type="EMBL" id="S83182">
    <property type="protein sequence ID" value="AAB46909.1"/>
    <property type="molecule type" value="mRNA"/>
</dbReference>
<dbReference type="EMBL" id="D49742">
    <property type="protein sequence ID" value="BAA08576.1"/>
    <property type="molecule type" value="mRNA"/>
</dbReference>
<dbReference type="EMBL" id="AY534754">
    <property type="protein sequence ID" value="AAS16352.1"/>
    <property type="molecule type" value="Genomic_DNA"/>
</dbReference>
<dbReference type="EMBL" id="AK290832">
    <property type="protein sequence ID" value="BAF83521.1"/>
    <property type="molecule type" value="mRNA"/>
</dbReference>
<dbReference type="EMBL" id="AK303948">
    <property type="protein sequence ID" value="BAH14081.1"/>
    <property type="molecule type" value="mRNA"/>
</dbReference>
<dbReference type="EMBL" id="AL390197">
    <property type="status" value="NOT_ANNOTATED_CDS"/>
    <property type="molecule type" value="Genomic_DNA"/>
</dbReference>
<dbReference type="EMBL" id="CH471066">
    <property type="protein sequence ID" value="EAW49505.1"/>
    <property type="molecule type" value="Genomic_DNA"/>
</dbReference>
<dbReference type="EMBL" id="BC031412">
    <property type="protein sequence ID" value="AAH31412.1"/>
    <property type="molecule type" value="mRNA"/>
</dbReference>
<dbReference type="CCDS" id="CCDS53579.1">
    <molecule id="Q14520-2"/>
</dbReference>
<dbReference type="CCDS" id="CCDS7577.1">
    <molecule id="Q14520-1"/>
</dbReference>
<dbReference type="PIR" id="JC4795">
    <property type="entry name" value="JC4795"/>
</dbReference>
<dbReference type="RefSeq" id="NP_001171131.1">
    <molecule id="Q14520-2"/>
    <property type="nucleotide sequence ID" value="NM_001177660.3"/>
</dbReference>
<dbReference type="RefSeq" id="NP_004123.1">
    <molecule id="Q14520-1"/>
    <property type="nucleotide sequence ID" value="NM_004132.5"/>
</dbReference>
<dbReference type="SMR" id="Q14520"/>
<dbReference type="BioGRID" id="109276">
    <property type="interactions" value="6"/>
</dbReference>
<dbReference type="FunCoup" id="Q14520">
    <property type="interactions" value="391"/>
</dbReference>
<dbReference type="IntAct" id="Q14520">
    <property type="interactions" value="4"/>
</dbReference>
<dbReference type="MINT" id="Q14520"/>
<dbReference type="STRING" id="9606.ENSP00000277903"/>
<dbReference type="BindingDB" id="Q14520"/>
<dbReference type="ChEMBL" id="CHEMBL5465370"/>
<dbReference type="DrugBank" id="DB08818">
    <property type="generic name" value="Hyaluronic acid"/>
</dbReference>
<dbReference type="MEROPS" id="S01.033"/>
<dbReference type="GlyCosmos" id="Q14520">
    <property type="glycosylation" value="5 sites, 2 glycans"/>
</dbReference>
<dbReference type="GlyGen" id="Q14520">
    <property type="glycosylation" value="8 sites, 3 O-linked glycans (5 sites)"/>
</dbReference>
<dbReference type="iPTMnet" id="Q14520"/>
<dbReference type="PhosphoSitePlus" id="Q14520"/>
<dbReference type="BioMuta" id="HABP2"/>
<dbReference type="DMDM" id="73919921"/>
<dbReference type="CPTAC" id="non-CPTAC-2675"/>
<dbReference type="jPOST" id="Q14520"/>
<dbReference type="MassIVE" id="Q14520"/>
<dbReference type="PaxDb" id="9606-ENSP00000277903"/>
<dbReference type="PeptideAtlas" id="Q14520"/>
<dbReference type="ProteomicsDB" id="26922"/>
<dbReference type="ProteomicsDB" id="60020">
    <molecule id="Q14520-1"/>
</dbReference>
<dbReference type="Antibodypedia" id="18461">
    <property type="antibodies" value="284 antibodies from 28 providers"/>
</dbReference>
<dbReference type="DNASU" id="3026"/>
<dbReference type="Ensembl" id="ENST00000351270.4">
    <molecule id="Q14520-1"/>
    <property type="protein sequence ID" value="ENSP00000277903.4"/>
    <property type="gene ID" value="ENSG00000148702.15"/>
</dbReference>
<dbReference type="Ensembl" id="ENST00000542051.5">
    <molecule id="Q14520-2"/>
    <property type="protein sequence ID" value="ENSP00000443283.1"/>
    <property type="gene ID" value="ENSG00000148702.15"/>
</dbReference>
<dbReference type="GeneID" id="3026"/>
<dbReference type="KEGG" id="hsa:3026"/>
<dbReference type="MANE-Select" id="ENST00000351270.4">
    <property type="protein sequence ID" value="ENSP00000277903.4"/>
    <property type="RefSeq nucleotide sequence ID" value="NM_004132.5"/>
    <property type="RefSeq protein sequence ID" value="NP_004123.1"/>
</dbReference>
<dbReference type="UCSC" id="uc001lai.5">
    <molecule id="Q14520-1"/>
    <property type="organism name" value="human"/>
</dbReference>
<dbReference type="AGR" id="HGNC:4798"/>
<dbReference type="CTD" id="3026"/>
<dbReference type="DisGeNET" id="3026"/>
<dbReference type="GeneCards" id="HABP2"/>
<dbReference type="HGNC" id="HGNC:4798">
    <property type="gene designation" value="HABP2"/>
</dbReference>
<dbReference type="HPA" id="ENSG00000148702">
    <property type="expression patterns" value="Tissue enriched (liver)"/>
</dbReference>
<dbReference type="MalaCards" id="HABP2"/>
<dbReference type="MIM" id="603924">
    <property type="type" value="gene"/>
</dbReference>
<dbReference type="MIM" id="616535">
    <property type="type" value="phenotype"/>
</dbReference>
<dbReference type="neXtProt" id="NX_Q14520"/>
<dbReference type="OpenTargets" id="ENSG00000148702"/>
<dbReference type="Orphanet" id="319487">
    <property type="disease" value="Familial papillary or follicular thyroid carcinoma"/>
</dbReference>
<dbReference type="PharmGKB" id="PA29172"/>
<dbReference type="VEuPathDB" id="HostDB:ENSG00000148702"/>
<dbReference type="eggNOG" id="KOG1217">
    <property type="taxonomic scope" value="Eukaryota"/>
</dbReference>
<dbReference type="eggNOG" id="KOG3627">
    <property type="taxonomic scope" value="Eukaryota"/>
</dbReference>
<dbReference type="GeneTree" id="ENSGT00940000157814"/>
<dbReference type="HOGENOM" id="CLU_006842_18_2_1"/>
<dbReference type="InParanoid" id="Q14520"/>
<dbReference type="OMA" id="GKTACGF"/>
<dbReference type="OrthoDB" id="9937281at2759"/>
<dbReference type="PAN-GO" id="Q14520">
    <property type="GO annotations" value="3 GO annotations based on evolutionary models"/>
</dbReference>
<dbReference type="PhylomeDB" id="Q14520"/>
<dbReference type="TreeFam" id="TF329901"/>
<dbReference type="BRENDA" id="3.4.21.B1">
    <property type="organism ID" value="2681"/>
</dbReference>
<dbReference type="PathwayCommons" id="Q14520"/>
<dbReference type="SABIO-RK" id="Q14520"/>
<dbReference type="SignaLink" id="Q14520"/>
<dbReference type="BioGRID-ORCS" id="3026">
    <property type="hits" value="9 hits in 1145 CRISPR screens"/>
</dbReference>
<dbReference type="GeneWiki" id="HABP2"/>
<dbReference type="GenomeRNAi" id="3026"/>
<dbReference type="Pharos" id="Q14520">
    <property type="development level" value="Tbio"/>
</dbReference>
<dbReference type="PRO" id="PR:Q14520"/>
<dbReference type="Proteomes" id="UP000005640">
    <property type="component" value="Chromosome 10"/>
</dbReference>
<dbReference type="RNAct" id="Q14520">
    <property type="molecule type" value="protein"/>
</dbReference>
<dbReference type="Bgee" id="ENSG00000148702">
    <property type="expression patterns" value="Expressed in right lobe of liver and 87 other cell types or tissues"/>
</dbReference>
<dbReference type="GO" id="GO:0005576">
    <property type="term" value="C:extracellular region"/>
    <property type="evidence" value="ECO:0000303"/>
    <property type="project" value="UniProtKB"/>
</dbReference>
<dbReference type="GO" id="GO:0005615">
    <property type="term" value="C:extracellular space"/>
    <property type="evidence" value="ECO:0000318"/>
    <property type="project" value="GO_Central"/>
</dbReference>
<dbReference type="GO" id="GO:0005509">
    <property type="term" value="F:calcium ion binding"/>
    <property type="evidence" value="ECO:0007669"/>
    <property type="project" value="InterPro"/>
</dbReference>
<dbReference type="GO" id="GO:0005539">
    <property type="term" value="F:glycosaminoglycan binding"/>
    <property type="evidence" value="ECO:0000304"/>
    <property type="project" value="ProtInc"/>
</dbReference>
<dbReference type="GO" id="GO:0008233">
    <property type="term" value="F:peptidase activity"/>
    <property type="evidence" value="ECO:0000314"/>
    <property type="project" value="MGI"/>
</dbReference>
<dbReference type="GO" id="GO:0004252">
    <property type="term" value="F:serine-type endopeptidase activity"/>
    <property type="evidence" value="ECO:0000318"/>
    <property type="project" value="GO_Central"/>
</dbReference>
<dbReference type="GO" id="GO:0007155">
    <property type="term" value="P:cell adhesion"/>
    <property type="evidence" value="ECO:0000304"/>
    <property type="project" value="ProtInc"/>
</dbReference>
<dbReference type="GO" id="GO:0006508">
    <property type="term" value="P:proteolysis"/>
    <property type="evidence" value="ECO:0000314"/>
    <property type="project" value="MGI"/>
</dbReference>
<dbReference type="CDD" id="cd00054">
    <property type="entry name" value="EGF_CA"/>
    <property type="match status" value="2"/>
</dbReference>
<dbReference type="CDD" id="cd00108">
    <property type="entry name" value="KR"/>
    <property type="match status" value="1"/>
</dbReference>
<dbReference type="CDD" id="cd00190">
    <property type="entry name" value="Tryp_SPc"/>
    <property type="match status" value="1"/>
</dbReference>
<dbReference type="FunFam" id="2.10.25.10:FF:000571">
    <property type="entry name" value="Hyaluronan-binding protein 2"/>
    <property type="match status" value="1"/>
</dbReference>
<dbReference type="FunFam" id="2.40.10.10:FF:000069">
    <property type="entry name" value="Hyaluronan-binding protein 2"/>
    <property type="match status" value="1"/>
</dbReference>
<dbReference type="FunFam" id="2.10.25.10:FF:000463">
    <property type="entry name" value="hyaluronan-binding protein 2"/>
    <property type="match status" value="1"/>
</dbReference>
<dbReference type="FunFam" id="2.40.20.10:FF:000001">
    <property type="entry name" value="Urokinase-type plasminogen activator"/>
    <property type="match status" value="1"/>
</dbReference>
<dbReference type="Gene3D" id="2.10.25.10">
    <property type="entry name" value="Laminin"/>
    <property type="match status" value="3"/>
</dbReference>
<dbReference type="Gene3D" id="2.40.20.10">
    <property type="entry name" value="Plasminogen Kringle 4"/>
    <property type="match status" value="1"/>
</dbReference>
<dbReference type="Gene3D" id="2.40.10.10">
    <property type="entry name" value="Trypsin-like serine proteases"/>
    <property type="match status" value="1"/>
</dbReference>
<dbReference type="InterPro" id="IPR001881">
    <property type="entry name" value="EGF-like_Ca-bd_dom"/>
</dbReference>
<dbReference type="InterPro" id="IPR000742">
    <property type="entry name" value="EGF-like_dom"/>
</dbReference>
<dbReference type="InterPro" id="IPR000001">
    <property type="entry name" value="Kringle"/>
</dbReference>
<dbReference type="InterPro" id="IPR013806">
    <property type="entry name" value="Kringle-like"/>
</dbReference>
<dbReference type="InterPro" id="IPR018056">
    <property type="entry name" value="Kringle_CS"/>
</dbReference>
<dbReference type="InterPro" id="IPR038178">
    <property type="entry name" value="Kringle_sf"/>
</dbReference>
<dbReference type="InterPro" id="IPR009003">
    <property type="entry name" value="Peptidase_S1_PA"/>
</dbReference>
<dbReference type="InterPro" id="IPR043504">
    <property type="entry name" value="Peptidase_S1_PA_chymotrypsin"/>
</dbReference>
<dbReference type="InterPro" id="IPR001314">
    <property type="entry name" value="Peptidase_S1A"/>
</dbReference>
<dbReference type="InterPro" id="IPR050127">
    <property type="entry name" value="Serine_Proteases_S1"/>
</dbReference>
<dbReference type="InterPro" id="IPR001254">
    <property type="entry name" value="Trypsin_dom"/>
</dbReference>
<dbReference type="InterPro" id="IPR018114">
    <property type="entry name" value="TRYPSIN_HIS"/>
</dbReference>
<dbReference type="InterPro" id="IPR033116">
    <property type="entry name" value="TRYPSIN_SER"/>
</dbReference>
<dbReference type="PANTHER" id="PTHR24264:SF40">
    <property type="entry name" value="HYALURONAN-BINDING PROTEIN 2"/>
    <property type="match status" value="1"/>
</dbReference>
<dbReference type="PANTHER" id="PTHR24264">
    <property type="entry name" value="TRYPSIN-RELATED"/>
    <property type="match status" value="1"/>
</dbReference>
<dbReference type="Pfam" id="PF00008">
    <property type="entry name" value="EGF"/>
    <property type="match status" value="2"/>
</dbReference>
<dbReference type="Pfam" id="PF00051">
    <property type="entry name" value="Kringle"/>
    <property type="match status" value="1"/>
</dbReference>
<dbReference type="Pfam" id="PF00089">
    <property type="entry name" value="Trypsin"/>
    <property type="match status" value="1"/>
</dbReference>
<dbReference type="PRINTS" id="PR00722">
    <property type="entry name" value="CHYMOTRYPSIN"/>
</dbReference>
<dbReference type="PRINTS" id="PR00018">
    <property type="entry name" value="KRINGLE"/>
</dbReference>
<dbReference type="SMART" id="SM00181">
    <property type="entry name" value="EGF"/>
    <property type="match status" value="3"/>
</dbReference>
<dbReference type="SMART" id="SM00179">
    <property type="entry name" value="EGF_CA"/>
    <property type="match status" value="2"/>
</dbReference>
<dbReference type="SMART" id="SM00130">
    <property type="entry name" value="KR"/>
    <property type="match status" value="1"/>
</dbReference>
<dbReference type="SMART" id="SM00020">
    <property type="entry name" value="Tryp_SPc"/>
    <property type="match status" value="1"/>
</dbReference>
<dbReference type="SUPFAM" id="SSF57196">
    <property type="entry name" value="EGF/Laminin"/>
    <property type="match status" value="2"/>
</dbReference>
<dbReference type="SUPFAM" id="SSF57440">
    <property type="entry name" value="Kringle-like"/>
    <property type="match status" value="1"/>
</dbReference>
<dbReference type="SUPFAM" id="SSF50494">
    <property type="entry name" value="Trypsin-like serine proteases"/>
    <property type="match status" value="1"/>
</dbReference>
<dbReference type="PROSITE" id="PS00022">
    <property type="entry name" value="EGF_1"/>
    <property type="match status" value="3"/>
</dbReference>
<dbReference type="PROSITE" id="PS01186">
    <property type="entry name" value="EGF_2"/>
    <property type="match status" value="2"/>
</dbReference>
<dbReference type="PROSITE" id="PS50026">
    <property type="entry name" value="EGF_3"/>
    <property type="match status" value="3"/>
</dbReference>
<dbReference type="PROSITE" id="PS00021">
    <property type="entry name" value="KRINGLE_1"/>
    <property type="match status" value="1"/>
</dbReference>
<dbReference type="PROSITE" id="PS50070">
    <property type="entry name" value="KRINGLE_2"/>
    <property type="match status" value="1"/>
</dbReference>
<dbReference type="PROSITE" id="PS50240">
    <property type="entry name" value="TRYPSIN_DOM"/>
    <property type="match status" value="1"/>
</dbReference>
<dbReference type="PROSITE" id="PS00134">
    <property type="entry name" value="TRYPSIN_HIS"/>
    <property type="match status" value="1"/>
</dbReference>
<dbReference type="PROSITE" id="PS00135">
    <property type="entry name" value="TRYPSIN_SER"/>
    <property type="match status" value="1"/>
</dbReference>
<accession>Q14520</accession>
<accession>A8K467</accession>
<accession>B7Z8U5</accession>
<accession>F5H5M6</accession>
<accession>O00663</accession>
<feature type="signal peptide" evidence="11">
    <location>
        <begin position="1"/>
        <end position="23"/>
    </location>
</feature>
<feature type="chain" id="PRO_0000027899" description="Factor VII-activating protease 50 kDa N-terminal heavy chain" evidence="11">
    <location>
        <begin position="24"/>
        <end position="313"/>
    </location>
</feature>
<feature type="chain" id="PRO_0000027900" description="Factor VII-activating protease 50 kDa N-terminal heavy chain alternate form" evidence="11">
    <location>
        <begin position="28"/>
        <end position="313"/>
    </location>
</feature>
<feature type="chain" id="PRO_0000027901" description="Factor VII-activating protease 27 kDa C-terminal light chain" evidence="8 11">
    <location>
        <begin position="314"/>
        <end position="560"/>
    </location>
</feature>
<feature type="chain" id="PRO_0000027902" description="Factor VII-activating protease 27 kDa C-terminal light chain alternate form" evidence="11">
    <location>
        <begin position="320"/>
        <end position="560"/>
    </location>
</feature>
<feature type="domain" description="EGF-like 1" evidence="3">
    <location>
        <begin position="73"/>
        <end position="109"/>
    </location>
</feature>
<feature type="domain" description="EGF-like 2" evidence="3">
    <location>
        <begin position="111"/>
        <end position="148"/>
    </location>
</feature>
<feature type="domain" description="EGF-like 3" evidence="3">
    <location>
        <begin position="150"/>
        <end position="188"/>
    </location>
</feature>
<feature type="domain" description="Kringle" evidence="4">
    <location>
        <begin position="193"/>
        <end position="276"/>
    </location>
</feature>
<feature type="domain" description="Peptidase S1" evidence="5">
    <location>
        <begin position="314"/>
        <end position="555"/>
    </location>
</feature>
<feature type="active site" description="Charge relay system" evidence="1 5">
    <location>
        <position position="362"/>
    </location>
</feature>
<feature type="active site" description="Charge relay system" evidence="1 5">
    <location>
        <position position="411"/>
    </location>
</feature>
<feature type="active site" description="Charge relay system" evidence="1 5">
    <location>
        <position position="509"/>
    </location>
</feature>
<feature type="site" description="Cleavage" evidence="8">
    <location>
        <begin position="480"/>
        <end position="481"/>
    </location>
</feature>
<feature type="glycosylation site" description="N-linked (GlcNAc...) asparagine" evidence="2">
    <location>
        <position position="54"/>
    </location>
</feature>
<feature type="glycosylation site" description="N-linked (GlcNAc...) asparagine" evidence="2">
    <location>
        <position position="207"/>
    </location>
</feature>
<feature type="disulfide bond" evidence="5">
    <location>
        <begin position="77"/>
        <end position="88"/>
    </location>
</feature>
<feature type="disulfide bond" evidence="5">
    <location>
        <begin position="82"/>
        <end position="97"/>
    </location>
</feature>
<feature type="disulfide bond" evidence="5">
    <location>
        <begin position="99"/>
        <end position="108"/>
    </location>
</feature>
<feature type="disulfide bond" evidence="5">
    <location>
        <begin position="115"/>
        <end position="125"/>
    </location>
</feature>
<feature type="disulfide bond" evidence="5">
    <location>
        <begin position="120"/>
        <end position="136"/>
    </location>
</feature>
<feature type="disulfide bond" evidence="5">
    <location>
        <begin position="138"/>
        <end position="147"/>
    </location>
</feature>
<feature type="disulfide bond" evidence="5">
    <location>
        <begin position="154"/>
        <end position="165"/>
    </location>
</feature>
<feature type="disulfide bond" evidence="5">
    <location>
        <begin position="159"/>
        <end position="176"/>
    </location>
</feature>
<feature type="disulfide bond" evidence="5">
    <location>
        <begin position="178"/>
        <end position="187"/>
    </location>
</feature>
<feature type="disulfide bond" evidence="5">
    <location>
        <begin position="194"/>
        <end position="276"/>
    </location>
</feature>
<feature type="disulfide bond" evidence="5">
    <location>
        <begin position="215"/>
        <end position="257"/>
    </location>
</feature>
<feature type="disulfide bond" evidence="5">
    <location>
        <begin position="246"/>
        <end position="271"/>
    </location>
</feature>
<feature type="disulfide bond" evidence="1">
    <location>
        <begin position="301"/>
        <end position="435"/>
    </location>
</feature>
<feature type="disulfide bond" description="Interchain (with C-521)" evidence="1">
    <location>
        <position position="301"/>
    </location>
</feature>
<feature type="disulfide bond" evidence="1 5">
    <location>
        <begin position="347"/>
        <end position="363"/>
    </location>
</feature>
<feature type="disulfide bond" evidence="1">
    <location>
        <begin position="355"/>
        <end position="424"/>
    </location>
</feature>
<feature type="disulfide bond" description="Interchain (with C-394)" evidence="1">
    <location>
        <position position="435"/>
    </location>
</feature>
<feature type="disulfide bond" evidence="1 5">
    <location>
        <begin position="447"/>
        <end position="515"/>
    </location>
</feature>
<feature type="disulfide bond" evidence="1 5">
    <location>
        <begin position="477"/>
        <end position="493"/>
    </location>
</feature>
<feature type="disulfide bond" evidence="1 5">
    <location>
        <begin position="505"/>
        <end position="533"/>
    </location>
</feature>
<feature type="splice variant" id="VSP_044583" description="In isoform 2." evidence="14">
    <location>
        <begin position="1"/>
        <end position="26"/>
    </location>
</feature>
<feature type="sequence variant" id="VAR_023399" description="In dbSNP:rs11575750." evidence="12">
    <original>V</original>
    <variation>I</variation>
    <location>
        <position position="90"/>
    </location>
</feature>
<feature type="sequence variant" id="VAR_023400" description="Variant Marburg II; dbSNP:rs11575688." evidence="9 12">
    <original>E</original>
    <variation>Q</variation>
    <location>
        <position position="393"/>
    </location>
</feature>
<feature type="sequence variant" id="VAR_023401" description="In NMTC5; associated with disease susceptibility; variant Marburg I; could be a prominent risk predictor of carotid stenosis; impairs the pro-urokinase activating potency; increased cell migration and increased cell proliferation; dominant negative effect; dbSNP:rs7080536." evidence="9 10 12">
    <original>G</original>
    <variation>E</variation>
    <location>
        <position position="534"/>
    </location>
</feature>
<feature type="sequence conflict" description="In Ref. 4; BAH14081." evidence="17" ref="4">
    <original>N</original>
    <variation>S</variation>
    <location>
        <position position="157"/>
    </location>
</feature>
<name>HABP2_HUMAN</name>
<evidence type="ECO:0000250" key="1">
    <source>
        <dbReference type="UniProtKB" id="Q04756"/>
    </source>
</evidence>
<evidence type="ECO:0000255" key="2"/>
<evidence type="ECO:0000255" key="3">
    <source>
        <dbReference type="PROSITE-ProRule" id="PRU00076"/>
    </source>
</evidence>
<evidence type="ECO:0000255" key="4">
    <source>
        <dbReference type="PROSITE-ProRule" id="PRU00121"/>
    </source>
</evidence>
<evidence type="ECO:0000255" key="5">
    <source>
        <dbReference type="PROSITE-ProRule" id="PRU00274"/>
    </source>
</evidence>
<evidence type="ECO:0000269" key="6">
    <source>
    </source>
</evidence>
<evidence type="ECO:0000269" key="7">
    <source>
    </source>
</evidence>
<evidence type="ECO:0000269" key="8">
    <source>
    </source>
</evidence>
<evidence type="ECO:0000269" key="9">
    <source>
    </source>
</evidence>
<evidence type="ECO:0000269" key="10">
    <source>
    </source>
</evidence>
<evidence type="ECO:0000269" key="11">
    <source>
    </source>
</evidence>
<evidence type="ECO:0000269" key="12">
    <source ref="3"/>
</evidence>
<evidence type="ECO:0000303" key="13">
    <source>
    </source>
</evidence>
<evidence type="ECO:0000303" key="14">
    <source>
    </source>
</evidence>
<evidence type="ECO:0000303" key="15">
    <source>
    </source>
</evidence>
<evidence type="ECO:0000303" key="16">
    <source>
    </source>
</evidence>
<evidence type="ECO:0000305" key="17"/>
<evidence type="ECO:0000305" key="18">
    <source>
    </source>
</evidence>
<evidence type="ECO:0000305" key="19">
    <source>
    </source>
</evidence>
<evidence type="ECO:0000312" key="20">
    <source>
        <dbReference type="HGNC" id="HGNC:4798"/>
    </source>
</evidence>